<dbReference type="EMBL" id="CP000029">
    <property type="protein sequence ID" value="AAW55139.1"/>
    <property type="molecule type" value="Genomic_DNA"/>
</dbReference>
<dbReference type="RefSeq" id="WP_001829747.1">
    <property type="nucleotide sequence ID" value="NC_002976.3"/>
</dbReference>
<dbReference type="SMR" id="Q5HM15"/>
<dbReference type="STRING" id="176279.SERP1815"/>
<dbReference type="GeneID" id="50018089"/>
<dbReference type="KEGG" id="ser:SERP1815"/>
<dbReference type="eggNOG" id="COG0256">
    <property type="taxonomic scope" value="Bacteria"/>
</dbReference>
<dbReference type="HOGENOM" id="CLU_098841_0_1_9"/>
<dbReference type="Proteomes" id="UP000000531">
    <property type="component" value="Chromosome"/>
</dbReference>
<dbReference type="GO" id="GO:0022625">
    <property type="term" value="C:cytosolic large ribosomal subunit"/>
    <property type="evidence" value="ECO:0007669"/>
    <property type="project" value="TreeGrafter"/>
</dbReference>
<dbReference type="GO" id="GO:0008097">
    <property type="term" value="F:5S rRNA binding"/>
    <property type="evidence" value="ECO:0007669"/>
    <property type="project" value="TreeGrafter"/>
</dbReference>
<dbReference type="GO" id="GO:0003735">
    <property type="term" value="F:structural constituent of ribosome"/>
    <property type="evidence" value="ECO:0007669"/>
    <property type="project" value="InterPro"/>
</dbReference>
<dbReference type="GO" id="GO:0006412">
    <property type="term" value="P:translation"/>
    <property type="evidence" value="ECO:0007669"/>
    <property type="project" value="UniProtKB-UniRule"/>
</dbReference>
<dbReference type="CDD" id="cd00432">
    <property type="entry name" value="Ribosomal_L18_L5e"/>
    <property type="match status" value="1"/>
</dbReference>
<dbReference type="FunFam" id="3.30.420.100:FF:000001">
    <property type="entry name" value="50S ribosomal protein L18"/>
    <property type="match status" value="1"/>
</dbReference>
<dbReference type="Gene3D" id="3.30.420.100">
    <property type="match status" value="1"/>
</dbReference>
<dbReference type="HAMAP" id="MF_01337_B">
    <property type="entry name" value="Ribosomal_uL18_B"/>
    <property type="match status" value="1"/>
</dbReference>
<dbReference type="InterPro" id="IPR004389">
    <property type="entry name" value="Ribosomal_uL18_bac-type"/>
</dbReference>
<dbReference type="InterPro" id="IPR005484">
    <property type="entry name" value="Ribosomal_uL18_bac/euk"/>
</dbReference>
<dbReference type="NCBIfam" id="TIGR00060">
    <property type="entry name" value="L18_bact"/>
    <property type="match status" value="1"/>
</dbReference>
<dbReference type="PANTHER" id="PTHR12899">
    <property type="entry name" value="39S RIBOSOMAL PROTEIN L18, MITOCHONDRIAL"/>
    <property type="match status" value="1"/>
</dbReference>
<dbReference type="PANTHER" id="PTHR12899:SF3">
    <property type="entry name" value="LARGE RIBOSOMAL SUBUNIT PROTEIN UL18M"/>
    <property type="match status" value="1"/>
</dbReference>
<dbReference type="Pfam" id="PF00861">
    <property type="entry name" value="Ribosomal_L18p"/>
    <property type="match status" value="1"/>
</dbReference>
<dbReference type="SUPFAM" id="SSF53137">
    <property type="entry name" value="Translational machinery components"/>
    <property type="match status" value="1"/>
</dbReference>
<name>RL18_STAEQ</name>
<protein>
    <recommendedName>
        <fullName evidence="1">Large ribosomal subunit protein uL18</fullName>
    </recommendedName>
    <alternativeName>
        <fullName evidence="2">50S ribosomal protein L18</fullName>
    </alternativeName>
</protein>
<comment type="function">
    <text evidence="1">This is one of the proteins that bind and probably mediate the attachment of the 5S RNA into the large ribosomal subunit, where it forms part of the central protuberance.</text>
</comment>
<comment type="subunit">
    <text evidence="1">Part of the 50S ribosomal subunit; part of the 5S rRNA/L5/L18/L25 subcomplex. Contacts the 5S and 23S rRNAs.</text>
</comment>
<comment type="similarity">
    <text evidence="1">Belongs to the universal ribosomal protein uL18 family.</text>
</comment>
<proteinExistence type="inferred from homology"/>
<keyword id="KW-1185">Reference proteome</keyword>
<keyword id="KW-0687">Ribonucleoprotein</keyword>
<keyword id="KW-0689">Ribosomal protein</keyword>
<keyword id="KW-0694">RNA-binding</keyword>
<keyword id="KW-0699">rRNA-binding</keyword>
<sequence>MISKIDKNKVRLKRHARVRTKLSGTAEKPRLNVYRSNKHIYAQIIDDVKGVTLAQASSQDKDIANTSASKVDLATTVGQEIAKKANDKGIKEIVFDRGGYLYHGRVKALADAARENGLEF</sequence>
<reference key="1">
    <citation type="journal article" date="2005" name="J. Bacteriol.">
        <title>Insights on evolution of virulence and resistance from the complete genome analysis of an early methicillin-resistant Staphylococcus aureus strain and a biofilm-producing methicillin-resistant Staphylococcus epidermidis strain.</title>
        <authorList>
            <person name="Gill S.R."/>
            <person name="Fouts D.E."/>
            <person name="Archer G.L."/>
            <person name="Mongodin E.F."/>
            <person name="DeBoy R.T."/>
            <person name="Ravel J."/>
            <person name="Paulsen I.T."/>
            <person name="Kolonay J.F."/>
            <person name="Brinkac L.M."/>
            <person name="Beanan M.J."/>
            <person name="Dodson R.J."/>
            <person name="Daugherty S.C."/>
            <person name="Madupu R."/>
            <person name="Angiuoli S.V."/>
            <person name="Durkin A.S."/>
            <person name="Haft D.H."/>
            <person name="Vamathevan J.J."/>
            <person name="Khouri H."/>
            <person name="Utterback T.R."/>
            <person name="Lee C."/>
            <person name="Dimitrov G."/>
            <person name="Jiang L."/>
            <person name="Qin H."/>
            <person name="Weidman J."/>
            <person name="Tran K."/>
            <person name="Kang K.H."/>
            <person name="Hance I.R."/>
            <person name="Nelson K.E."/>
            <person name="Fraser C.M."/>
        </authorList>
    </citation>
    <scope>NUCLEOTIDE SEQUENCE [LARGE SCALE GENOMIC DNA]</scope>
    <source>
        <strain>ATCC 35984 / DSM 28319 / BCRC 17069 / CCUG 31568 / BM 3577 / RP62A</strain>
    </source>
</reference>
<evidence type="ECO:0000255" key="1">
    <source>
        <dbReference type="HAMAP-Rule" id="MF_01337"/>
    </source>
</evidence>
<evidence type="ECO:0000305" key="2"/>
<feature type="chain" id="PRO_0000131349" description="Large ribosomal subunit protein uL18">
    <location>
        <begin position="1"/>
        <end position="120"/>
    </location>
</feature>
<gene>
    <name evidence="1" type="primary">rplR</name>
    <name type="ordered locus">SERP1815</name>
</gene>
<organism>
    <name type="scientific">Staphylococcus epidermidis (strain ATCC 35984 / DSM 28319 / BCRC 17069 / CCUG 31568 / BM 3577 / RP62A)</name>
    <dbReference type="NCBI Taxonomy" id="176279"/>
    <lineage>
        <taxon>Bacteria</taxon>
        <taxon>Bacillati</taxon>
        <taxon>Bacillota</taxon>
        <taxon>Bacilli</taxon>
        <taxon>Bacillales</taxon>
        <taxon>Staphylococcaceae</taxon>
        <taxon>Staphylococcus</taxon>
    </lineage>
</organism>
<accession>Q5HM15</accession>